<gene>
    <name evidence="1" type="primary">ihfB</name>
    <name evidence="1" type="synonym">himD</name>
    <name type="ordered locus">Sama_1737</name>
</gene>
<organism>
    <name type="scientific">Shewanella amazonensis (strain ATCC BAA-1098 / SB2B)</name>
    <dbReference type="NCBI Taxonomy" id="326297"/>
    <lineage>
        <taxon>Bacteria</taxon>
        <taxon>Pseudomonadati</taxon>
        <taxon>Pseudomonadota</taxon>
        <taxon>Gammaproteobacteria</taxon>
        <taxon>Alteromonadales</taxon>
        <taxon>Shewanellaceae</taxon>
        <taxon>Shewanella</taxon>
    </lineage>
</organism>
<comment type="function">
    <text evidence="1">This protein is one of the two subunits of integration host factor, a specific DNA-binding protein that functions in genetic recombination as well as in transcriptional and translational control.</text>
</comment>
<comment type="subunit">
    <text evidence="1">Heterodimer of an alpha and a beta chain.</text>
</comment>
<comment type="similarity">
    <text evidence="1">Belongs to the bacterial histone-like protein family.</text>
</comment>
<reference key="1">
    <citation type="submission" date="2006-12" db="EMBL/GenBank/DDBJ databases">
        <title>Complete sequence of Shewanella amazonensis SB2B.</title>
        <authorList>
            <consortium name="US DOE Joint Genome Institute"/>
            <person name="Copeland A."/>
            <person name="Lucas S."/>
            <person name="Lapidus A."/>
            <person name="Barry K."/>
            <person name="Detter J.C."/>
            <person name="Glavina del Rio T."/>
            <person name="Hammon N."/>
            <person name="Israni S."/>
            <person name="Dalin E."/>
            <person name="Tice H."/>
            <person name="Pitluck S."/>
            <person name="Munk A.C."/>
            <person name="Brettin T."/>
            <person name="Bruce D."/>
            <person name="Han C."/>
            <person name="Tapia R."/>
            <person name="Gilna P."/>
            <person name="Schmutz J."/>
            <person name="Larimer F."/>
            <person name="Land M."/>
            <person name="Hauser L."/>
            <person name="Kyrpides N."/>
            <person name="Mikhailova N."/>
            <person name="Fredrickson J."/>
            <person name="Richardson P."/>
        </authorList>
    </citation>
    <scope>NUCLEOTIDE SEQUENCE [LARGE SCALE GENOMIC DNA]</scope>
    <source>
        <strain>ATCC BAA-1098 / SB2B</strain>
    </source>
</reference>
<sequence>MTKSELIEKLATRQSQLSAKEVESAVKEMLEQMATTLESGERIEIRGFGSFSLHYRAPRTGRNPKTGTSVELEGKYVPHFKPGKELRERVDAVNV</sequence>
<feature type="chain" id="PRO_1000060653" description="Integration host factor subunit beta">
    <location>
        <begin position="1"/>
        <end position="95"/>
    </location>
</feature>
<name>IHFB_SHEAM</name>
<dbReference type="EMBL" id="CP000507">
    <property type="protein sequence ID" value="ABL99942.1"/>
    <property type="molecule type" value="Genomic_DNA"/>
</dbReference>
<dbReference type="RefSeq" id="WP_011759850.1">
    <property type="nucleotide sequence ID" value="NC_008700.1"/>
</dbReference>
<dbReference type="SMR" id="A1S6D6"/>
<dbReference type="STRING" id="326297.Sama_1737"/>
<dbReference type="KEGG" id="saz:Sama_1737"/>
<dbReference type="eggNOG" id="COG0776">
    <property type="taxonomic scope" value="Bacteria"/>
</dbReference>
<dbReference type="HOGENOM" id="CLU_105066_2_0_6"/>
<dbReference type="OrthoDB" id="9804203at2"/>
<dbReference type="Proteomes" id="UP000009175">
    <property type="component" value="Chromosome"/>
</dbReference>
<dbReference type="GO" id="GO:0005694">
    <property type="term" value="C:chromosome"/>
    <property type="evidence" value="ECO:0007669"/>
    <property type="project" value="InterPro"/>
</dbReference>
<dbReference type="GO" id="GO:0005829">
    <property type="term" value="C:cytosol"/>
    <property type="evidence" value="ECO:0007669"/>
    <property type="project" value="TreeGrafter"/>
</dbReference>
<dbReference type="GO" id="GO:0003677">
    <property type="term" value="F:DNA binding"/>
    <property type="evidence" value="ECO:0007669"/>
    <property type="project" value="UniProtKB-UniRule"/>
</dbReference>
<dbReference type="GO" id="GO:0030527">
    <property type="term" value="F:structural constituent of chromatin"/>
    <property type="evidence" value="ECO:0007669"/>
    <property type="project" value="InterPro"/>
</dbReference>
<dbReference type="GO" id="GO:0006310">
    <property type="term" value="P:DNA recombination"/>
    <property type="evidence" value="ECO:0007669"/>
    <property type="project" value="UniProtKB-UniRule"/>
</dbReference>
<dbReference type="GO" id="GO:0006355">
    <property type="term" value="P:regulation of DNA-templated transcription"/>
    <property type="evidence" value="ECO:0007669"/>
    <property type="project" value="UniProtKB-UniRule"/>
</dbReference>
<dbReference type="GO" id="GO:0006417">
    <property type="term" value="P:regulation of translation"/>
    <property type="evidence" value="ECO:0007669"/>
    <property type="project" value="UniProtKB-UniRule"/>
</dbReference>
<dbReference type="CDD" id="cd13836">
    <property type="entry name" value="IHF_B"/>
    <property type="match status" value="1"/>
</dbReference>
<dbReference type="FunFam" id="4.10.520.10:FF:000003">
    <property type="entry name" value="Integration host factor subunit beta"/>
    <property type="match status" value="1"/>
</dbReference>
<dbReference type="Gene3D" id="4.10.520.10">
    <property type="entry name" value="IHF-like DNA-binding proteins"/>
    <property type="match status" value="1"/>
</dbReference>
<dbReference type="HAMAP" id="MF_00381">
    <property type="entry name" value="IHF_beta"/>
    <property type="match status" value="1"/>
</dbReference>
<dbReference type="InterPro" id="IPR000119">
    <property type="entry name" value="Hist_DNA-bd"/>
</dbReference>
<dbReference type="InterPro" id="IPR020816">
    <property type="entry name" value="Histone-like_DNA-bd_CS"/>
</dbReference>
<dbReference type="InterPro" id="IPR010992">
    <property type="entry name" value="IHF-like_DNA-bd_dom_sf"/>
</dbReference>
<dbReference type="InterPro" id="IPR005685">
    <property type="entry name" value="IHF_beta"/>
</dbReference>
<dbReference type="NCBIfam" id="TIGR00988">
    <property type="entry name" value="hip"/>
    <property type="match status" value="1"/>
</dbReference>
<dbReference type="NCBIfam" id="NF001222">
    <property type="entry name" value="PRK00199.1"/>
    <property type="match status" value="1"/>
</dbReference>
<dbReference type="PANTHER" id="PTHR33175">
    <property type="entry name" value="DNA-BINDING PROTEIN HU"/>
    <property type="match status" value="1"/>
</dbReference>
<dbReference type="PANTHER" id="PTHR33175:SF5">
    <property type="entry name" value="INTEGRATION HOST FACTOR SUBUNIT BETA"/>
    <property type="match status" value="1"/>
</dbReference>
<dbReference type="Pfam" id="PF00216">
    <property type="entry name" value="Bac_DNA_binding"/>
    <property type="match status" value="1"/>
</dbReference>
<dbReference type="PRINTS" id="PR01727">
    <property type="entry name" value="DNABINDINGHU"/>
</dbReference>
<dbReference type="SMART" id="SM00411">
    <property type="entry name" value="BHL"/>
    <property type="match status" value="1"/>
</dbReference>
<dbReference type="SUPFAM" id="SSF47729">
    <property type="entry name" value="IHF-like DNA-binding proteins"/>
    <property type="match status" value="1"/>
</dbReference>
<dbReference type="PROSITE" id="PS00045">
    <property type="entry name" value="HISTONE_LIKE"/>
    <property type="match status" value="1"/>
</dbReference>
<accession>A1S6D6</accession>
<protein>
    <recommendedName>
        <fullName evidence="1">Integration host factor subunit beta</fullName>
        <shortName evidence="1">IHF-beta</shortName>
    </recommendedName>
</protein>
<proteinExistence type="inferred from homology"/>
<keyword id="KW-0233">DNA recombination</keyword>
<keyword id="KW-0238">DNA-binding</keyword>
<keyword id="KW-1185">Reference proteome</keyword>
<keyword id="KW-0804">Transcription</keyword>
<keyword id="KW-0805">Transcription regulation</keyword>
<keyword id="KW-0810">Translation regulation</keyword>
<evidence type="ECO:0000255" key="1">
    <source>
        <dbReference type="HAMAP-Rule" id="MF_00381"/>
    </source>
</evidence>